<reference key="1">
    <citation type="journal article" date="2003" name="Nat. Genet.">
        <title>Comparative analysis of the genome sequences of Bordetella pertussis, Bordetella parapertussis and Bordetella bronchiseptica.</title>
        <authorList>
            <person name="Parkhill J."/>
            <person name="Sebaihia M."/>
            <person name="Preston A."/>
            <person name="Murphy L.D."/>
            <person name="Thomson N.R."/>
            <person name="Harris D.E."/>
            <person name="Holden M.T.G."/>
            <person name="Churcher C.M."/>
            <person name="Bentley S.D."/>
            <person name="Mungall K.L."/>
            <person name="Cerdeno-Tarraga A.-M."/>
            <person name="Temple L."/>
            <person name="James K.D."/>
            <person name="Harris B."/>
            <person name="Quail M.A."/>
            <person name="Achtman M."/>
            <person name="Atkin R."/>
            <person name="Baker S."/>
            <person name="Basham D."/>
            <person name="Bason N."/>
            <person name="Cherevach I."/>
            <person name="Chillingworth T."/>
            <person name="Collins M."/>
            <person name="Cronin A."/>
            <person name="Davis P."/>
            <person name="Doggett J."/>
            <person name="Feltwell T."/>
            <person name="Goble A."/>
            <person name="Hamlin N."/>
            <person name="Hauser H."/>
            <person name="Holroyd S."/>
            <person name="Jagels K."/>
            <person name="Leather S."/>
            <person name="Moule S."/>
            <person name="Norberczak H."/>
            <person name="O'Neil S."/>
            <person name="Ormond D."/>
            <person name="Price C."/>
            <person name="Rabbinowitsch E."/>
            <person name="Rutter S."/>
            <person name="Sanders M."/>
            <person name="Saunders D."/>
            <person name="Seeger K."/>
            <person name="Sharp S."/>
            <person name="Simmonds M."/>
            <person name="Skelton J."/>
            <person name="Squares R."/>
            <person name="Squares S."/>
            <person name="Stevens K."/>
            <person name="Unwin L."/>
            <person name="Whitehead S."/>
            <person name="Barrell B.G."/>
            <person name="Maskell D.J."/>
        </authorList>
    </citation>
    <scope>NUCLEOTIDE SEQUENCE [LARGE SCALE GENOMIC DNA]</scope>
    <source>
        <strain>ATCC BAA-588 / NCTC 13252 / RB50</strain>
    </source>
</reference>
<keyword id="KW-0413">Isomerase</keyword>
<keyword id="KW-0697">Rotamase</keyword>
<keyword id="KW-0732">Signal</keyword>
<organism>
    <name type="scientific">Bordetella bronchiseptica (strain ATCC BAA-588 / NCTC 13252 / RB50)</name>
    <name type="common">Alcaligenes bronchisepticus</name>
    <dbReference type="NCBI Taxonomy" id="257310"/>
    <lineage>
        <taxon>Bacteria</taxon>
        <taxon>Pseudomonadati</taxon>
        <taxon>Pseudomonadota</taxon>
        <taxon>Betaproteobacteria</taxon>
        <taxon>Burkholderiales</taxon>
        <taxon>Alcaligenaceae</taxon>
        <taxon>Bordetella</taxon>
    </lineage>
</organism>
<accession>Q7WCX5</accession>
<sequence length="258" mass="28937">MKRIAMLAAACVIAVPAFAQNVATVNGKPITQKSLDEFVKLVVSQGATDSPQLREQIKQEMINRQVFVQAAEKDGVAKQADVQTEIELARQGILVRALMADYLQKHPVTDAQVKAEYEKIKKEQAGKMEYKVRHILVEDEKTANDLLAQVKSNKSKFDDLAKKNSKDPGSAERGGDLGWAPATNYVQPFAEAVTKLKKGQLVDKPVQTQFGWHVIQVDDTRPVEFPAMDQVRPQLEEMLRQQTLANYQKQLREQAKIQ</sequence>
<feature type="signal peptide" evidence="1">
    <location>
        <begin position="1"/>
        <end position="19"/>
    </location>
</feature>
<feature type="chain" id="PRO_0000312516" description="Probable parvulin-type peptidyl-prolyl cis-trans isomerase">
    <location>
        <begin position="20"/>
        <end position="258"/>
    </location>
</feature>
<feature type="domain" description="PpiC" evidence="2">
    <location>
        <begin position="127"/>
        <end position="219"/>
    </location>
</feature>
<feature type="region of interest" description="Disordered" evidence="3">
    <location>
        <begin position="158"/>
        <end position="178"/>
    </location>
</feature>
<feature type="compositionally biased region" description="Basic and acidic residues" evidence="3">
    <location>
        <begin position="158"/>
        <end position="175"/>
    </location>
</feature>
<gene>
    <name type="ordered locus">BB3803</name>
</gene>
<evidence type="ECO:0000255" key="1"/>
<evidence type="ECO:0000255" key="2">
    <source>
        <dbReference type="PROSITE-ProRule" id="PRU00278"/>
    </source>
</evidence>
<evidence type="ECO:0000256" key="3">
    <source>
        <dbReference type="SAM" id="MobiDB-lite"/>
    </source>
</evidence>
<evidence type="ECO:0000305" key="4"/>
<comment type="catalytic activity">
    <reaction>
        <text>[protein]-peptidylproline (omega=180) = [protein]-peptidylproline (omega=0)</text>
        <dbReference type="Rhea" id="RHEA:16237"/>
        <dbReference type="Rhea" id="RHEA-COMP:10747"/>
        <dbReference type="Rhea" id="RHEA-COMP:10748"/>
        <dbReference type="ChEBI" id="CHEBI:83833"/>
        <dbReference type="ChEBI" id="CHEBI:83834"/>
        <dbReference type="EC" id="5.2.1.8"/>
    </reaction>
</comment>
<comment type="similarity">
    <text evidence="4">Belongs to the PpiC/parvulin rotamase family.</text>
</comment>
<name>PLP1_BORBR</name>
<protein>
    <recommendedName>
        <fullName>Probable parvulin-type peptidyl-prolyl cis-trans isomerase</fullName>
        <shortName>PPIase</shortName>
        <ecNumber>5.2.1.8</ecNumber>
    </recommendedName>
    <alternativeName>
        <fullName>Rotamase</fullName>
    </alternativeName>
</protein>
<proteinExistence type="inferred from homology"/>
<dbReference type="EC" id="5.2.1.8"/>
<dbReference type="EMBL" id="BX640448">
    <property type="protein sequence ID" value="CAE35777.1"/>
    <property type="molecule type" value="Genomic_DNA"/>
</dbReference>
<dbReference type="RefSeq" id="WP_003813874.1">
    <property type="nucleotide sequence ID" value="NC_002927.3"/>
</dbReference>
<dbReference type="SMR" id="Q7WCX5"/>
<dbReference type="KEGG" id="bbr:BB3803"/>
<dbReference type="eggNOG" id="COG0760">
    <property type="taxonomic scope" value="Bacteria"/>
</dbReference>
<dbReference type="HOGENOM" id="CLU_034646_1_1_4"/>
<dbReference type="Proteomes" id="UP000001027">
    <property type="component" value="Chromosome"/>
</dbReference>
<dbReference type="GO" id="GO:0003755">
    <property type="term" value="F:peptidyl-prolyl cis-trans isomerase activity"/>
    <property type="evidence" value="ECO:0007669"/>
    <property type="project" value="UniProtKB-KW"/>
</dbReference>
<dbReference type="Gene3D" id="1.10.8.1040">
    <property type="match status" value="1"/>
</dbReference>
<dbReference type="Gene3D" id="3.10.50.40">
    <property type="match status" value="1"/>
</dbReference>
<dbReference type="InterPro" id="IPR046357">
    <property type="entry name" value="PPIase_dom_sf"/>
</dbReference>
<dbReference type="InterPro" id="IPR000297">
    <property type="entry name" value="PPIase_PpiC"/>
</dbReference>
<dbReference type="InterPro" id="IPR023058">
    <property type="entry name" value="PPIase_PpiC_CS"/>
</dbReference>
<dbReference type="InterPro" id="IPR050245">
    <property type="entry name" value="PrsA_foldase"/>
</dbReference>
<dbReference type="PANTHER" id="PTHR47245:SF1">
    <property type="entry name" value="FOLDASE PROTEIN PRSA"/>
    <property type="match status" value="1"/>
</dbReference>
<dbReference type="PANTHER" id="PTHR47245">
    <property type="entry name" value="PEPTIDYLPROLYL ISOMERASE"/>
    <property type="match status" value="1"/>
</dbReference>
<dbReference type="Pfam" id="PF13616">
    <property type="entry name" value="Rotamase_3"/>
    <property type="match status" value="1"/>
</dbReference>
<dbReference type="SUPFAM" id="SSF54534">
    <property type="entry name" value="FKBP-like"/>
    <property type="match status" value="1"/>
</dbReference>
<dbReference type="PROSITE" id="PS01096">
    <property type="entry name" value="PPIC_PPIASE_1"/>
    <property type="match status" value="1"/>
</dbReference>
<dbReference type="PROSITE" id="PS50198">
    <property type="entry name" value="PPIC_PPIASE_2"/>
    <property type="match status" value="1"/>
</dbReference>